<organism>
    <name type="scientific">Bradyrhizobium diazoefficiens (strain JCM 10833 / BCRC 13528 / IAM 13628 / NBRC 14792 / USDA 110)</name>
    <dbReference type="NCBI Taxonomy" id="224911"/>
    <lineage>
        <taxon>Bacteria</taxon>
        <taxon>Pseudomonadati</taxon>
        <taxon>Pseudomonadota</taxon>
        <taxon>Alphaproteobacteria</taxon>
        <taxon>Hyphomicrobiales</taxon>
        <taxon>Nitrobacteraceae</taxon>
        <taxon>Bradyrhizobium</taxon>
    </lineage>
</organism>
<reference key="1">
    <citation type="journal article" date="2002" name="DNA Res.">
        <title>Complete genomic sequence of nitrogen-fixing symbiotic bacterium Bradyrhizobium japonicum USDA110.</title>
        <authorList>
            <person name="Kaneko T."/>
            <person name="Nakamura Y."/>
            <person name="Sato S."/>
            <person name="Minamisawa K."/>
            <person name="Uchiumi T."/>
            <person name="Sasamoto S."/>
            <person name="Watanabe A."/>
            <person name="Idesawa K."/>
            <person name="Iriguchi M."/>
            <person name="Kawashima K."/>
            <person name="Kohara M."/>
            <person name="Matsumoto M."/>
            <person name="Shimpo S."/>
            <person name="Tsuruoka H."/>
            <person name="Wada T."/>
            <person name="Yamada M."/>
            <person name="Tabata S."/>
        </authorList>
    </citation>
    <scope>NUCLEOTIDE SEQUENCE [LARGE SCALE GENOMIC DNA]</scope>
    <source>
        <strain>JCM 10833 / BCRC 13528 / IAM 13628 / NBRC 14792 / USDA 110</strain>
    </source>
</reference>
<accession>Q89UG2</accession>
<comment type="catalytic activity">
    <reaction evidence="1">
        <text>urea + 2 H2O + H(+) = hydrogencarbonate + 2 NH4(+)</text>
        <dbReference type="Rhea" id="RHEA:20557"/>
        <dbReference type="ChEBI" id="CHEBI:15377"/>
        <dbReference type="ChEBI" id="CHEBI:15378"/>
        <dbReference type="ChEBI" id="CHEBI:16199"/>
        <dbReference type="ChEBI" id="CHEBI:17544"/>
        <dbReference type="ChEBI" id="CHEBI:28938"/>
        <dbReference type="EC" id="3.5.1.5"/>
    </reaction>
</comment>
<comment type="pathway">
    <text evidence="1">Nitrogen metabolism; urea degradation; CO(2) and NH(3) from urea (urease route): step 1/1.</text>
</comment>
<comment type="subunit">
    <text evidence="1">Heterotrimer of UreA (gamma), UreB (beta) and UreC (alpha) subunits. Three heterotrimers associate to form the active enzyme.</text>
</comment>
<comment type="subcellular location">
    <subcellularLocation>
        <location evidence="1">Cytoplasm</location>
    </subcellularLocation>
</comment>
<comment type="similarity">
    <text evidence="1">Belongs to the urease beta subunit family.</text>
</comment>
<gene>
    <name evidence="1" type="primary">ureB</name>
    <name type="ordered locus">blr1455</name>
</gene>
<name>URE2_BRADU</name>
<proteinExistence type="inferred from homology"/>
<keyword id="KW-0963">Cytoplasm</keyword>
<keyword id="KW-0378">Hydrolase</keyword>
<keyword id="KW-1185">Reference proteome</keyword>
<sequence>MIPGELFIQDGEIELNAGRKTVTLTVANTGDRPIQVGSHYHFFETNPALKFERKKARGMRLDIAAGTAVRFEPGQTRDVQLVALAGKKTIYGFRGDVMGKL</sequence>
<dbReference type="EC" id="3.5.1.5" evidence="1"/>
<dbReference type="EMBL" id="BA000040">
    <property type="protein sequence ID" value="BAC46720.1"/>
    <property type="molecule type" value="Genomic_DNA"/>
</dbReference>
<dbReference type="RefSeq" id="NP_768095.1">
    <property type="nucleotide sequence ID" value="NC_004463.1"/>
</dbReference>
<dbReference type="RefSeq" id="WP_011084271.1">
    <property type="nucleotide sequence ID" value="NC_004463.1"/>
</dbReference>
<dbReference type="SMR" id="Q89UG2"/>
<dbReference type="STRING" id="224911.AAV28_04220"/>
<dbReference type="EnsemblBacteria" id="BAC46720">
    <property type="protein sequence ID" value="BAC46720"/>
    <property type="gene ID" value="BAC46720"/>
</dbReference>
<dbReference type="GeneID" id="46488731"/>
<dbReference type="KEGG" id="bja:blr1455"/>
<dbReference type="PATRIC" id="fig|224911.44.peg.886"/>
<dbReference type="eggNOG" id="COG0832">
    <property type="taxonomic scope" value="Bacteria"/>
</dbReference>
<dbReference type="HOGENOM" id="CLU_129707_1_1_5"/>
<dbReference type="InParanoid" id="Q89UG2"/>
<dbReference type="OrthoDB" id="9797217at2"/>
<dbReference type="PhylomeDB" id="Q89UG2"/>
<dbReference type="UniPathway" id="UPA00258">
    <property type="reaction ID" value="UER00370"/>
</dbReference>
<dbReference type="Proteomes" id="UP000002526">
    <property type="component" value="Chromosome"/>
</dbReference>
<dbReference type="GO" id="GO:0035550">
    <property type="term" value="C:urease complex"/>
    <property type="evidence" value="ECO:0007669"/>
    <property type="project" value="InterPro"/>
</dbReference>
<dbReference type="GO" id="GO:0009039">
    <property type="term" value="F:urease activity"/>
    <property type="evidence" value="ECO:0000318"/>
    <property type="project" value="GO_Central"/>
</dbReference>
<dbReference type="GO" id="GO:0043419">
    <property type="term" value="P:urea catabolic process"/>
    <property type="evidence" value="ECO:0000318"/>
    <property type="project" value="GO_Central"/>
</dbReference>
<dbReference type="CDD" id="cd00407">
    <property type="entry name" value="Urease_beta"/>
    <property type="match status" value="1"/>
</dbReference>
<dbReference type="FunFam" id="2.10.150.10:FF:000001">
    <property type="entry name" value="Urease subunit beta"/>
    <property type="match status" value="1"/>
</dbReference>
<dbReference type="Gene3D" id="2.10.150.10">
    <property type="entry name" value="Urease, beta subunit"/>
    <property type="match status" value="1"/>
</dbReference>
<dbReference type="HAMAP" id="MF_01954">
    <property type="entry name" value="Urease_beta"/>
    <property type="match status" value="1"/>
</dbReference>
<dbReference type="InterPro" id="IPR002019">
    <property type="entry name" value="Urease_beta-like"/>
</dbReference>
<dbReference type="InterPro" id="IPR036461">
    <property type="entry name" value="Urease_betasu_sf"/>
</dbReference>
<dbReference type="InterPro" id="IPR050069">
    <property type="entry name" value="Urease_subunit"/>
</dbReference>
<dbReference type="NCBIfam" id="NF009682">
    <property type="entry name" value="PRK13203.1"/>
    <property type="match status" value="1"/>
</dbReference>
<dbReference type="NCBIfam" id="TIGR00192">
    <property type="entry name" value="urease_beta"/>
    <property type="match status" value="1"/>
</dbReference>
<dbReference type="PANTHER" id="PTHR33569">
    <property type="entry name" value="UREASE"/>
    <property type="match status" value="1"/>
</dbReference>
<dbReference type="PANTHER" id="PTHR33569:SF1">
    <property type="entry name" value="UREASE"/>
    <property type="match status" value="1"/>
</dbReference>
<dbReference type="Pfam" id="PF00699">
    <property type="entry name" value="Urease_beta"/>
    <property type="match status" value="1"/>
</dbReference>
<dbReference type="SUPFAM" id="SSF51278">
    <property type="entry name" value="Urease, beta-subunit"/>
    <property type="match status" value="1"/>
</dbReference>
<evidence type="ECO:0000255" key="1">
    <source>
        <dbReference type="HAMAP-Rule" id="MF_01954"/>
    </source>
</evidence>
<protein>
    <recommendedName>
        <fullName evidence="1">Urease subunit beta</fullName>
        <ecNumber evidence="1">3.5.1.5</ecNumber>
    </recommendedName>
    <alternativeName>
        <fullName evidence="1">Urea amidohydrolase subunit beta</fullName>
    </alternativeName>
</protein>
<feature type="chain" id="PRO_0000234231" description="Urease subunit beta">
    <location>
        <begin position="1"/>
        <end position="101"/>
    </location>
</feature>